<gene>
    <name evidence="1" type="primary">aspS</name>
    <name type="ordered locus">GSU1463</name>
</gene>
<comment type="function">
    <text evidence="1">Aspartyl-tRNA synthetase with relaxed tRNA specificity since it is able to aspartylate not only its cognate tRNA(Asp) but also tRNA(Asn). Reaction proceeds in two steps: L-aspartate is first activated by ATP to form Asp-AMP and then transferred to the acceptor end of tRNA(Asp/Asn).</text>
</comment>
<comment type="catalytic activity">
    <reaction evidence="1">
        <text>tRNA(Asx) + L-aspartate + ATP = L-aspartyl-tRNA(Asx) + AMP + diphosphate</text>
        <dbReference type="Rhea" id="RHEA:18349"/>
        <dbReference type="Rhea" id="RHEA-COMP:9710"/>
        <dbReference type="Rhea" id="RHEA-COMP:9711"/>
        <dbReference type="ChEBI" id="CHEBI:29991"/>
        <dbReference type="ChEBI" id="CHEBI:30616"/>
        <dbReference type="ChEBI" id="CHEBI:33019"/>
        <dbReference type="ChEBI" id="CHEBI:78442"/>
        <dbReference type="ChEBI" id="CHEBI:78516"/>
        <dbReference type="ChEBI" id="CHEBI:456215"/>
        <dbReference type="EC" id="6.1.1.23"/>
    </reaction>
</comment>
<comment type="subunit">
    <text evidence="1">Homodimer.</text>
</comment>
<comment type="subcellular location">
    <subcellularLocation>
        <location evidence="1">Cytoplasm</location>
    </subcellularLocation>
</comment>
<comment type="similarity">
    <text evidence="1">Belongs to the class-II aminoacyl-tRNA synthetase family. Type 1 subfamily.</text>
</comment>
<evidence type="ECO:0000255" key="1">
    <source>
        <dbReference type="HAMAP-Rule" id="MF_00044"/>
    </source>
</evidence>
<organism>
    <name type="scientific">Geobacter sulfurreducens (strain ATCC 51573 / DSM 12127 / PCA)</name>
    <dbReference type="NCBI Taxonomy" id="243231"/>
    <lineage>
        <taxon>Bacteria</taxon>
        <taxon>Pseudomonadati</taxon>
        <taxon>Thermodesulfobacteriota</taxon>
        <taxon>Desulfuromonadia</taxon>
        <taxon>Geobacterales</taxon>
        <taxon>Geobacteraceae</taxon>
        <taxon>Geobacter</taxon>
    </lineage>
</organism>
<keyword id="KW-0030">Aminoacyl-tRNA synthetase</keyword>
<keyword id="KW-0067">ATP-binding</keyword>
<keyword id="KW-0963">Cytoplasm</keyword>
<keyword id="KW-0436">Ligase</keyword>
<keyword id="KW-0547">Nucleotide-binding</keyword>
<keyword id="KW-0648">Protein biosynthesis</keyword>
<keyword id="KW-1185">Reference proteome</keyword>
<accession>Q74D56</accession>
<sequence>MTDMLGDWKRSHLCGTLTKADVGKQVTLMGWVMRRRDHGGLIFIDLRDREGLAQIVFDPAKAPEAHREAEAVRNEYVVAIKGEVVPRPEGTVNPNMKTGEVEILVTQCKLLNRSKALPFTLDDYVDVAENLRLKHRYLDLRRTPLQQNLILRSRVSQVTRQYLTENGFLEIETPFLTKSTPEGARDFLVPSRINQGNFYALPQSPQIFKQILMISGFDRYFQVVRCFRDEDLRADRQPEFTQIDCELSFVDRDDVIAVMEGLIARIFKEAKEIDVQLPIPRMTYAEAIRRYGVDNPDVRFGLELVELTDIVKGSGFKVFADVAAGGGIIKGLNAKGCARFSRKEIDDLTEFVKIYGAKGLAYVKIEGGEWHSPIAKFFTAQEIADMNRAFGAEEGDLLLFVADKPKVVNDSLGKLRNQLAQILGLVDKGTFKFVWITDFPLLEWDEEEKRWAAVHHPFTAPMDEDLDKVESDPGACRAKAYDLVLNGNEIGGGSIRIHQQHIQSLMFRMLGLSEEEARAKFGFLLDALEFGTPPHGGIAFGMDRLIMLLTGSDSIRDVIAFPKTQKGACLMSDAPSPVDSKQLRELAIKVTVKQ</sequence>
<proteinExistence type="inferred from homology"/>
<protein>
    <recommendedName>
        <fullName evidence="1">Aspartate--tRNA(Asp/Asn) ligase</fullName>
        <ecNumber evidence="1">6.1.1.23</ecNumber>
    </recommendedName>
    <alternativeName>
        <fullName evidence="1">Aspartyl-tRNA synthetase</fullName>
        <shortName evidence="1">AspRS</shortName>
    </alternativeName>
    <alternativeName>
        <fullName evidence="1">Non-discriminating aspartyl-tRNA synthetase</fullName>
        <shortName evidence="1">ND-AspRS</shortName>
    </alternativeName>
</protein>
<reference key="1">
    <citation type="journal article" date="2003" name="Science">
        <title>Genome of Geobacter sulfurreducens: metal reduction in subsurface environments.</title>
        <authorList>
            <person name="Methe B.A."/>
            <person name="Nelson K.E."/>
            <person name="Eisen J.A."/>
            <person name="Paulsen I.T."/>
            <person name="Nelson W.C."/>
            <person name="Heidelberg J.F."/>
            <person name="Wu D."/>
            <person name="Wu M."/>
            <person name="Ward N.L."/>
            <person name="Beanan M.J."/>
            <person name="Dodson R.J."/>
            <person name="Madupu R."/>
            <person name="Brinkac L.M."/>
            <person name="Daugherty S.C."/>
            <person name="DeBoy R.T."/>
            <person name="Durkin A.S."/>
            <person name="Gwinn M.L."/>
            <person name="Kolonay J.F."/>
            <person name="Sullivan S.A."/>
            <person name="Haft D.H."/>
            <person name="Selengut J."/>
            <person name="Davidsen T.M."/>
            <person name="Zafar N."/>
            <person name="White O."/>
            <person name="Tran B."/>
            <person name="Romero C."/>
            <person name="Forberger H.A."/>
            <person name="Weidman J.F."/>
            <person name="Khouri H.M."/>
            <person name="Feldblyum T.V."/>
            <person name="Utterback T.R."/>
            <person name="Van Aken S.E."/>
            <person name="Lovley D.R."/>
            <person name="Fraser C.M."/>
        </authorList>
    </citation>
    <scope>NUCLEOTIDE SEQUENCE [LARGE SCALE GENOMIC DNA]</scope>
    <source>
        <strain>ATCC 51573 / DSM 12127 / PCA</strain>
    </source>
</reference>
<dbReference type="EC" id="6.1.1.23" evidence="1"/>
<dbReference type="EMBL" id="AE017180">
    <property type="protein sequence ID" value="AAR34837.1"/>
    <property type="molecule type" value="Genomic_DNA"/>
</dbReference>
<dbReference type="RefSeq" id="NP_952514.1">
    <property type="nucleotide sequence ID" value="NC_002939.5"/>
</dbReference>
<dbReference type="RefSeq" id="WP_010942109.1">
    <property type="nucleotide sequence ID" value="NC_002939.5"/>
</dbReference>
<dbReference type="SMR" id="Q74D56"/>
<dbReference type="FunCoup" id="Q74D56">
    <property type="interactions" value="570"/>
</dbReference>
<dbReference type="STRING" id="243231.GSU1463"/>
<dbReference type="EnsemblBacteria" id="AAR34837">
    <property type="protein sequence ID" value="AAR34837"/>
    <property type="gene ID" value="GSU1463"/>
</dbReference>
<dbReference type="KEGG" id="gsu:GSU1463"/>
<dbReference type="PATRIC" id="fig|243231.5.peg.1509"/>
<dbReference type="eggNOG" id="COG0173">
    <property type="taxonomic scope" value="Bacteria"/>
</dbReference>
<dbReference type="HOGENOM" id="CLU_014330_3_2_7"/>
<dbReference type="InParanoid" id="Q74D56"/>
<dbReference type="OrthoDB" id="9802326at2"/>
<dbReference type="Proteomes" id="UP000000577">
    <property type="component" value="Chromosome"/>
</dbReference>
<dbReference type="GO" id="GO:0005737">
    <property type="term" value="C:cytoplasm"/>
    <property type="evidence" value="ECO:0007669"/>
    <property type="project" value="UniProtKB-SubCell"/>
</dbReference>
<dbReference type="GO" id="GO:0004815">
    <property type="term" value="F:aspartate-tRNA ligase activity"/>
    <property type="evidence" value="ECO:0000318"/>
    <property type="project" value="GO_Central"/>
</dbReference>
<dbReference type="GO" id="GO:0050560">
    <property type="term" value="F:aspartate-tRNA(Asn) ligase activity"/>
    <property type="evidence" value="ECO:0007669"/>
    <property type="project" value="UniProtKB-EC"/>
</dbReference>
<dbReference type="GO" id="GO:0005524">
    <property type="term" value="F:ATP binding"/>
    <property type="evidence" value="ECO:0007669"/>
    <property type="project" value="UniProtKB-UniRule"/>
</dbReference>
<dbReference type="GO" id="GO:0003676">
    <property type="term" value="F:nucleic acid binding"/>
    <property type="evidence" value="ECO:0007669"/>
    <property type="project" value="InterPro"/>
</dbReference>
<dbReference type="GO" id="GO:0006422">
    <property type="term" value="P:aspartyl-tRNA aminoacylation"/>
    <property type="evidence" value="ECO:0000318"/>
    <property type="project" value="GO_Central"/>
</dbReference>
<dbReference type="CDD" id="cd00777">
    <property type="entry name" value="AspRS_core"/>
    <property type="match status" value="1"/>
</dbReference>
<dbReference type="CDD" id="cd04317">
    <property type="entry name" value="EcAspRS_like_N"/>
    <property type="match status" value="1"/>
</dbReference>
<dbReference type="Gene3D" id="3.30.930.10">
    <property type="entry name" value="Bira Bifunctional Protein, Domain 2"/>
    <property type="match status" value="1"/>
</dbReference>
<dbReference type="Gene3D" id="3.30.1360.30">
    <property type="entry name" value="GAD-like domain"/>
    <property type="match status" value="1"/>
</dbReference>
<dbReference type="Gene3D" id="2.40.50.140">
    <property type="entry name" value="Nucleic acid-binding proteins"/>
    <property type="match status" value="1"/>
</dbReference>
<dbReference type="HAMAP" id="MF_00044">
    <property type="entry name" value="Asp_tRNA_synth_type1"/>
    <property type="match status" value="1"/>
</dbReference>
<dbReference type="InterPro" id="IPR004364">
    <property type="entry name" value="Aa-tRNA-synt_II"/>
</dbReference>
<dbReference type="InterPro" id="IPR006195">
    <property type="entry name" value="aa-tRNA-synth_II"/>
</dbReference>
<dbReference type="InterPro" id="IPR045864">
    <property type="entry name" value="aa-tRNA-synth_II/BPL/LPL"/>
</dbReference>
<dbReference type="InterPro" id="IPR004524">
    <property type="entry name" value="Asp-tRNA-ligase_1"/>
</dbReference>
<dbReference type="InterPro" id="IPR047089">
    <property type="entry name" value="Asp-tRNA-ligase_1_N"/>
</dbReference>
<dbReference type="InterPro" id="IPR002312">
    <property type="entry name" value="Asp/Asn-tRNA-synth_IIb"/>
</dbReference>
<dbReference type="InterPro" id="IPR047090">
    <property type="entry name" value="AspRS_core"/>
</dbReference>
<dbReference type="InterPro" id="IPR004115">
    <property type="entry name" value="GAD-like_sf"/>
</dbReference>
<dbReference type="InterPro" id="IPR029351">
    <property type="entry name" value="GAD_dom"/>
</dbReference>
<dbReference type="InterPro" id="IPR012340">
    <property type="entry name" value="NA-bd_OB-fold"/>
</dbReference>
<dbReference type="InterPro" id="IPR004365">
    <property type="entry name" value="NA-bd_OB_tRNA"/>
</dbReference>
<dbReference type="NCBIfam" id="TIGR00459">
    <property type="entry name" value="aspS_bact"/>
    <property type="match status" value="1"/>
</dbReference>
<dbReference type="NCBIfam" id="NF001750">
    <property type="entry name" value="PRK00476.1"/>
    <property type="match status" value="1"/>
</dbReference>
<dbReference type="PANTHER" id="PTHR22594:SF5">
    <property type="entry name" value="ASPARTATE--TRNA LIGASE, MITOCHONDRIAL"/>
    <property type="match status" value="1"/>
</dbReference>
<dbReference type="PANTHER" id="PTHR22594">
    <property type="entry name" value="ASPARTYL/LYSYL-TRNA SYNTHETASE"/>
    <property type="match status" value="1"/>
</dbReference>
<dbReference type="Pfam" id="PF02938">
    <property type="entry name" value="GAD"/>
    <property type="match status" value="1"/>
</dbReference>
<dbReference type="Pfam" id="PF00152">
    <property type="entry name" value="tRNA-synt_2"/>
    <property type="match status" value="1"/>
</dbReference>
<dbReference type="Pfam" id="PF01336">
    <property type="entry name" value="tRNA_anti-codon"/>
    <property type="match status" value="1"/>
</dbReference>
<dbReference type="PRINTS" id="PR01042">
    <property type="entry name" value="TRNASYNTHASP"/>
</dbReference>
<dbReference type="SUPFAM" id="SSF55681">
    <property type="entry name" value="Class II aaRS and biotin synthetases"/>
    <property type="match status" value="1"/>
</dbReference>
<dbReference type="SUPFAM" id="SSF55261">
    <property type="entry name" value="GAD domain-like"/>
    <property type="match status" value="1"/>
</dbReference>
<dbReference type="SUPFAM" id="SSF50249">
    <property type="entry name" value="Nucleic acid-binding proteins"/>
    <property type="match status" value="1"/>
</dbReference>
<dbReference type="PROSITE" id="PS50862">
    <property type="entry name" value="AA_TRNA_LIGASE_II"/>
    <property type="match status" value="1"/>
</dbReference>
<feature type="chain" id="PRO_0000110876" description="Aspartate--tRNA(Asp/Asn) ligase">
    <location>
        <begin position="1"/>
        <end position="594"/>
    </location>
</feature>
<feature type="region of interest" description="Aspartate" evidence="1">
    <location>
        <begin position="206"/>
        <end position="209"/>
    </location>
</feature>
<feature type="binding site" evidence="1">
    <location>
        <position position="182"/>
    </location>
    <ligand>
        <name>L-aspartate</name>
        <dbReference type="ChEBI" id="CHEBI:29991"/>
    </ligand>
</feature>
<feature type="binding site" evidence="1">
    <location>
        <begin position="228"/>
        <end position="230"/>
    </location>
    <ligand>
        <name>ATP</name>
        <dbReference type="ChEBI" id="CHEBI:30616"/>
    </ligand>
</feature>
<feature type="binding site" evidence="1">
    <location>
        <position position="228"/>
    </location>
    <ligand>
        <name>L-aspartate</name>
        <dbReference type="ChEBI" id="CHEBI:29991"/>
    </ligand>
</feature>
<feature type="binding site" evidence="1">
    <location>
        <position position="237"/>
    </location>
    <ligand>
        <name>ATP</name>
        <dbReference type="ChEBI" id="CHEBI:30616"/>
    </ligand>
</feature>
<feature type="binding site" evidence="1">
    <location>
        <position position="455"/>
    </location>
    <ligand>
        <name>L-aspartate</name>
        <dbReference type="ChEBI" id="CHEBI:29991"/>
    </ligand>
</feature>
<feature type="binding site" evidence="1">
    <location>
        <position position="489"/>
    </location>
    <ligand>
        <name>ATP</name>
        <dbReference type="ChEBI" id="CHEBI:30616"/>
    </ligand>
</feature>
<feature type="binding site" evidence="1">
    <location>
        <position position="496"/>
    </location>
    <ligand>
        <name>L-aspartate</name>
        <dbReference type="ChEBI" id="CHEBI:29991"/>
    </ligand>
</feature>
<feature type="binding site" evidence="1">
    <location>
        <begin position="541"/>
        <end position="544"/>
    </location>
    <ligand>
        <name>ATP</name>
        <dbReference type="ChEBI" id="CHEBI:30616"/>
    </ligand>
</feature>
<feature type="site" description="Important for tRNA non-discrimination" evidence="1">
    <location>
        <position position="38"/>
    </location>
</feature>
<feature type="site" description="Important for tRNA non-discrimination" evidence="1">
    <location>
        <position position="90"/>
    </location>
</feature>
<name>SYDND_GEOSL</name>